<accession>Q9PK30</accession>
<sequence length="246" mass="27397">MKKSVGLIGNTGRMGGLLTEALRSHPRCLLGKGFSRRSQTLLKEVVLENDILIDFSAPEVTETLMDILLVTPKPVIIGTTGFSDNSVIRDKLSLLSEYVPVIFSPNMSLGAYVQRRLTACAAKLFDASYDVRILETHHRTKVDAISGTALSLAEAICSAKKDHFGDEQEPCIEMFGSRVGNIFGEHEVSFVGKNERFVIRHEAFSRQTFSDGVLIILRKIMEERLPAGYYTSDVLYESLFQEVVFD</sequence>
<evidence type="ECO:0000255" key="1">
    <source>
        <dbReference type="HAMAP-Rule" id="MF_00102"/>
    </source>
</evidence>
<evidence type="ECO:0000305" key="2"/>
<keyword id="KW-0028">Amino-acid biosynthesis</keyword>
<keyword id="KW-0963">Cytoplasm</keyword>
<keyword id="KW-0220">Diaminopimelate biosynthesis</keyword>
<keyword id="KW-0457">Lysine biosynthesis</keyword>
<keyword id="KW-0520">NAD</keyword>
<keyword id="KW-0521">NADP</keyword>
<keyword id="KW-0560">Oxidoreductase</keyword>
<organism>
    <name type="scientific">Chlamydia muridarum (strain MoPn / Nigg)</name>
    <dbReference type="NCBI Taxonomy" id="243161"/>
    <lineage>
        <taxon>Bacteria</taxon>
        <taxon>Pseudomonadati</taxon>
        <taxon>Chlamydiota</taxon>
        <taxon>Chlamydiia</taxon>
        <taxon>Chlamydiales</taxon>
        <taxon>Chlamydiaceae</taxon>
        <taxon>Chlamydia/Chlamydophila group</taxon>
        <taxon>Chlamydia</taxon>
    </lineage>
</organism>
<dbReference type="EC" id="1.17.1.8" evidence="1"/>
<dbReference type="EMBL" id="AE002160">
    <property type="protein sequence ID" value="AAF39471.1"/>
    <property type="molecule type" value="Genomic_DNA"/>
</dbReference>
<dbReference type="PIR" id="C81679">
    <property type="entry name" value="C81679"/>
</dbReference>
<dbReference type="RefSeq" id="WP_010231088.1">
    <property type="nucleotide sequence ID" value="NZ_CP063055.1"/>
</dbReference>
<dbReference type="SMR" id="Q9PK30"/>
<dbReference type="GeneID" id="1246004"/>
<dbReference type="KEGG" id="cmu:TC_0643"/>
<dbReference type="eggNOG" id="COG0289">
    <property type="taxonomic scope" value="Bacteria"/>
</dbReference>
<dbReference type="HOGENOM" id="CLU_047479_2_2_0"/>
<dbReference type="OrthoDB" id="9790352at2"/>
<dbReference type="UniPathway" id="UPA00034">
    <property type="reaction ID" value="UER00018"/>
</dbReference>
<dbReference type="Proteomes" id="UP000000800">
    <property type="component" value="Chromosome"/>
</dbReference>
<dbReference type="GO" id="GO:0005829">
    <property type="term" value="C:cytosol"/>
    <property type="evidence" value="ECO:0007669"/>
    <property type="project" value="TreeGrafter"/>
</dbReference>
<dbReference type="GO" id="GO:0008839">
    <property type="term" value="F:4-hydroxy-tetrahydrodipicolinate reductase"/>
    <property type="evidence" value="ECO:0007669"/>
    <property type="project" value="UniProtKB-EC"/>
</dbReference>
<dbReference type="GO" id="GO:0051287">
    <property type="term" value="F:NAD binding"/>
    <property type="evidence" value="ECO:0007669"/>
    <property type="project" value="UniProtKB-UniRule"/>
</dbReference>
<dbReference type="GO" id="GO:0050661">
    <property type="term" value="F:NADP binding"/>
    <property type="evidence" value="ECO:0007669"/>
    <property type="project" value="UniProtKB-UniRule"/>
</dbReference>
<dbReference type="GO" id="GO:0016726">
    <property type="term" value="F:oxidoreductase activity, acting on CH or CH2 groups, NAD or NADP as acceptor"/>
    <property type="evidence" value="ECO:0007669"/>
    <property type="project" value="UniProtKB-UniRule"/>
</dbReference>
<dbReference type="GO" id="GO:0019877">
    <property type="term" value="P:diaminopimelate biosynthetic process"/>
    <property type="evidence" value="ECO:0007669"/>
    <property type="project" value="UniProtKB-UniRule"/>
</dbReference>
<dbReference type="GO" id="GO:0009089">
    <property type="term" value="P:lysine biosynthetic process via diaminopimelate"/>
    <property type="evidence" value="ECO:0007669"/>
    <property type="project" value="UniProtKB-UniRule"/>
</dbReference>
<dbReference type="CDD" id="cd02274">
    <property type="entry name" value="DHDPR_N"/>
    <property type="match status" value="1"/>
</dbReference>
<dbReference type="Gene3D" id="3.30.360.10">
    <property type="entry name" value="Dihydrodipicolinate Reductase, domain 2"/>
    <property type="match status" value="1"/>
</dbReference>
<dbReference type="Gene3D" id="3.40.50.720">
    <property type="entry name" value="NAD(P)-binding Rossmann-like Domain"/>
    <property type="match status" value="1"/>
</dbReference>
<dbReference type="HAMAP" id="MF_00102">
    <property type="entry name" value="DapB"/>
    <property type="match status" value="1"/>
</dbReference>
<dbReference type="InterPro" id="IPR022663">
    <property type="entry name" value="DapB_C"/>
</dbReference>
<dbReference type="InterPro" id="IPR000846">
    <property type="entry name" value="DapB_N"/>
</dbReference>
<dbReference type="InterPro" id="IPR022664">
    <property type="entry name" value="DapB_N_CS"/>
</dbReference>
<dbReference type="InterPro" id="IPR023940">
    <property type="entry name" value="DHDPR_bac"/>
</dbReference>
<dbReference type="InterPro" id="IPR036291">
    <property type="entry name" value="NAD(P)-bd_dom_sf"/>
</dbReference>
<dbReference type="NCBIfam" id="TIGR00036">
    <property type="entry name" value="dapB"/>
    <property type="match status" value="1"/>
</dbReference>
<dbReference type="PANTHER" id="PTHR20836:SF0">
    <property type="entry name" value="4-HYDROXY-TETRAHYDRODIPICOLINATE REDUCTASE 1, CHLOROPLASTIC-RELATED"/>
    <property type="match status" value="1"/>
</dbReference>
<dbReference type="PANTHER" id="PTHR20836">
    <property type="entry name" value="DIHYDRODIPICOLINATE REDUCTASE"/>
    <property type="match status" value="1"/>
</dbReference>
<dbReference type="Pfam" id="PF05173">
    <property type="entry name" value="DapB_C"/>
    <property type="match status" value="1"/>
</dbReference>
<dbReference type="Pfam" id="PF01113">
    <property type="entry name" value="DapB_N"/>
    <property type="match status" value="1"/>
</dbReference>
<dbReference type="PIRSF" id="PIRSF000161">
    <property type="entry name" value="DHPR"/>
    <property type="match status" value="1"/>
</dbReference>
<dbReference type="SUPFAM" id="SSF55347">
    <property type="entry name" value="Glyceraldehyde-3-phosphate dehydrogenase-like, C-terminal domain"/>
    <property type="match status" value="1"/>
</dbReference>
<dbReference type="SUPFAM" id="SSF51735">
    <property type="entry name" value="NAD(P)-binding Rossmann-fold domains"/>
    <property type="match status" value="1"/>
</dbReference>
<dbReference type="PROSITE" id="PS01298">
    <property type="entry name" value="DAPB"/>
    <property type="match status" value="1"/>
</dbReference>
<gene>
    <name evidence="1" type="primary">dapB</name>
    <name type="ordered locus">TC_0643</name>
</gene>
<feature type="chain" id="PRO_0000141427" description="4-hydroxy-tetrahydrodipicolinate reductase">
    <location>
        <begin position="1"/>
        <end position="246"/>
    </location>
</feature>
<feature type="active site" description="Proton donor/acceptor" evidence="1">
    <location>
        <position position="137"/>
    </location>
</feature>
<feature type="active site" description="Proton donor" evidence="1">
    <location>
        <position position="141"/>
    </location>
</feature>
<feature type="binding site" evidence="1">
    <location>
        <begin position="9"/>
        <end position="14"/>
    </location>
    <ligand>
        <name>NAD(+)</name>
        <dbReference type="ChEBI" id="CHEBI:57540"/>
    </ligand>
</feature>
<feature type="binding site" evidence="1">
    <location>
        <position position="36"/>
    </location>
    <ligand>
        <name>NADP(+)</name>
        <dbReference type="ChEBI" id="CHEBI:58349"/>
    </ligand>
</feature>
<feature type="binding site" evidence="1">
    <location>
        <begin position="78"/>
        <end position="80"/>
    </location>
    <ligand>
        <name>NAD(+)</name>
        <dbReference type="ChEBI" id="CHEBI:57540"/>
    </ligand>
</feature>
<feature type="binding site" evidence="1">
    <location>
        <begin position="104"/>
        <end position="107"/>
    </location>
    <ligand>
        <name>NAD(+)</name>
        <dbReference type="ChEBI" id="CHEBI:57540"/>
    </ligand>
</feature>
<feature type="binding site" evidence="1">
    <location>
        <position position="138"/>
    </location>
    <ligand>
        <name>(S)-2,3,4,5-tetrahydrodipicolinate</name>
        <dbReference type="ChEBI" id="CHEBI:16845"/>
    </ligand>
</feature>
<feature type="binding site" evidence="1">
    <location>
        <begin position="147"/>
        <end position="148"/>
    </location>
    <ligand>
        <name>(S)-2,3,4,5-tetrahydrodipicolinate</name>
        <dbReference type="ChEBI" id="CHEBI:16845"/>
    </ligand>
</feature>
<protein>
    <recommendedName>
        <fullName evidence="1">4-hydroxy-tetrahydrodipicolinate reductase</fullName>
        <shortName evidence="1">HTPA reductase</shortName>
        <ecNumber evidence="1">1.17.1.8</ecNumber>
    </recommendedName>
</protein>
<reference key="1">
    <citation type="journal article" date="2000" name="Nucleic Acids Res.">
        <title>Genome sequences of Chlamydia trachomatis MoPn and Chlamydia pneumoniae AR39.</title>
        <authorList>
            <person name="Read T.D."/>
            <person name="Brunham R.C."/>
            <person name="Shen C."/>
            <person name="Gill S.R."/>
            <person name="Heidelberg J.F."/>
            <person name="White O."/>
            <person name="Hickey E.K."/>
            <person name="Peterson J.D."/>
            <person name="Utterback T.R."/>
            <person name="Berry K.J."/>
            <person name="Bass S."/>
            <person name="Linher K.D."/>
            <person name="Weidman J.F."/>
            <person name="Khouri H.M."/>
            <person name="Craven B."/>
            <person name="Bowman C."/>
            <person name="Dodson R.J."/>
            <person name="Gwinn M.L."/>
            <person name="Nelson W.C."/>
            <person name="DeBoy R.T."/>
            <person name="Kolonay J.F."/>
            <person name="McClarty G."/>
            <person name="Salzberg S.L."/>
            <person name="Eisen J.A."/>
            <person name="Fraser C.M."/>
        </authorList>
    </citation>
    <scope>NUCLEOTIDE SEQUENCE [LARGE SCALE GENOMIC DNA]</scope>
    <source>
        <strain>MoPn / Nigg</strain>
    </source>
</reference>
<name>DAPB_CHLMU</name>
<comment type="function">
    <text evidence="1">Catalyzes the conversion of 4-hydroxy-tetrahydrodipicolinate (HTPA) to tetrahydrodipicolinate.</text>
</comment>
<comment type="catalytic activity">
    <reaction evidence="1">
        <text>(S)-2,3,4,5-tetrahydrodipicolinate + NAD(+) + H2O = (2S,4S)-4-hydroxy-2,3,4,5-tetrahydrodipicolinate + NADH + H(+)</text>
        <dbReference type="Rhea" id="RHEA:35323"/>
        <dbReference type="ChEBI" id="CHEBI:15377"/>
        <dbReference type="ChEBI" id="CHEBI:15378"/>
        <dbReference type="ChEBI" id="CHEBI:16845"/>
        <dbReference type="ChEBI" id="CHEBI:57540"/>
        <dbReference type="ChEBI" id="CHEBI:57945"/>
        <dbReference type="ChEBI" id="CHEBI:67139"/>
        <dbReference type="EC" id="1.17.1.8"/>
    </reaction>
</comment>
<comment type="catalytic activity">
    <reaction evidence="1">
        <text>(S)-2,3,4,5-tetrahydrodipicolinate + NADP(+) + H2O = (2S,4S)-4-hydroxy-2,3,4,5-tetrahydrodipicolinate + NADPH + H(+)</text>
        <dbReference type="Rhea" id="RHEA:35331"/>
        <dbReference type="ChEBI" id="CHEBI:15377"/>
        <dbReference type="ChEBI" id="CHEBI:15378"/>
        <dbReference type="ChEBI" id="CHEBI:16845"/>
        <dbReference type="ChEBI" id="CHEBI:57783"/>
        <dbReference type="ChEBI" id="CHEBI:58349"/>
        <dbReference type="ChEBI" id="CHEBI:67139"/>
        <dbReference type="EC" id="1.17.1.8"/>
    </reaction>
</comment>
<comment type="pathway">
    <text evidence="1">Amino-acid biosynthesis; L-lysine biosynthesis via DAP pathway; (S)-tetrahydrodipicolinate from L-aspartate: step 4/4.</text>
</comment>
<comment type="subcellular location">
    <subcellularLocation>
        <location evidence="1">Cytoplasm</location>
    </subcellularLocation>
</comment>
<comment type="similarity">
    <text evidence="1">Belongs to the DapB family.</text>
</comment>
<comment type="caution">
    <text evidence="2">Was originally thought to be a dihydrodipicolinate reductase (DHDPR), catalyzing the conversion of dihydrodipicolinate to tetrahydrodipicolinate. However, it was shown in E.coli that the substrate of the enzymatic reaction is not dihydrodipicolinate (DHDP) but in fact (2S,4S)-4-hydroxy-2,3,4,5-tetrahydrodipicolinic acid (HTPA), the product released by the DapA-catalyzed reaction.</text>
</comment>
<proteinExistence type="inferred from homology"/>